<sequence>MRQVTIPLIQSKSMFCVIYRSSKRDQTYLYVEKKDDFSQVPEALMKGFGQPQLAMMLPLDGRKKLVNAELEKVKQALSEQGYYLQLPPPPEDLLKQHLSSVGQNTSPADR</sequence>
<evidence type="ECO:0000255" key="1">
    <source>
        <dbReference type="HAMAP-Rule" id="MF_01866"/>
    </source>
</evidence>
<evidence type="ECO:0000256" key="2">
    <source>
        <dbReference type="SAM" id="MobiDB-lite"/>
    </source>
</evidence>
<dbReference type="EMBL" id="CP000026">
    <property type="protein sequence ID" value="AAV77031.1"/>
    <property type="molecule type" value="Genomic_DNA"/>
</dbReference>
<dbReference type="SMR" id="Q5PCU0"/>
<dbReference type="KEGG" id="spt:SPA1060"/>
<dbReference type="HOGENOM" id="CLU_155118_1_0_6"/>
<dbReference type="Proteomes" id="UP000008185">
    <property type="component" value="Chromosome"/>
</dbReference>
<dbReference type="Gene3D" id="3.10.510.20">
    <property type="entry name" value="YcgL domain"/>
    <property type="match status" value="1"/>
</dbReference>
<dbReference type="HAMAP" id="MF_01866">
    <property type="entry name" value="UPF0745"/>
    <property type="match status" value="1"/>
</dbReference>
<dbReference type="InterPro" id="IPR038068">
    <property type="entry name" value="YcgL-like_sf"/>
</dbReference>
<dbReference type="InterPro" id="IPR027354">
    <property type="entry name" value="YcgL_dom"/>
</dbReference>
<dbReference type="PANTHER" id="PTHR38109">
    <property type="entry name" value="PROTEIN YCGL"/>
    <property type="match status" value="1"/>
</dbReference>
<dbReference type="PANTHER" id="PTHR38109:SF1">
    <property type="entry name" value="PROTEIN YCGL"/>
    <property type="match status" value="1"/>
</dbReference>
<dbReference type="Pfam" id="PF05166">
    <property type="entry name" value="YcgL"/>
    <property type="match status" value="1"/>
</dbReference>
<dbReference type="SUPFAM" id="SSF160191">
    <property type="entry name" value="YcgL-like"/>
    <property type="match status" value="1"/>
</dbReference>
<dbReference type="PROSITE" id="PS51648">
    <property type="entry name" value="YCGL"/>
    <property type="match status" value="1"/>
</dbReference>
<name>YCGL_SALPA</name>
<organism>
    <name type="scientific">Salmonella paratyphi A (strain ATCC 9150 / SARB42)</name>
    <dbReference type="NCBI Taxonomy" id="295319"/>
    <lineage>
        <taxon>Bacteria</taxon>
        <taxon>Pseudomonadati</taxon>
        <taxon>Pseudomonadota</taxon>
        <taxon>Gammaproteobacteria</taxon>
        <taxon>Enterobacterales</taxon>
        <taxon>Enterobacteriaceae</taxon>
        <taxon>Salmonella</taxon>
    </lineage>
</organism>
<proteinExistence type="inferred from homology"/>
<feature type="chain" id="PRO_0000375356" description="Protein YcgL">
    <location>
        <begin position="1"/>
        <end position="110"/>
    </location>
</feature>
<feature type="domain" description="YcgL" evidence="1">
    <location>
        <begin position="14"/>
        <end position="98"/>
    </location>
</feature>
<feature type="region of interest" description="Disordered" evidence="2">
    <location>
        <begin position="88"/>
        <end position="110"/>
    </location>
</feature>
<feature type="compositionally biased region" description="Polar residues" evidence="2">
    <location>
        <begin position="97"/>
        <end position="110"/>
    </location>
</feature>
<gene>
    <name evidence="1" type="primary">ycgL</name>
    <name type="ordered locus">SPA1060</name>
</gene>
<reference key="1">
    <citation type="journal article" date="2004" name="Nat. Genet.">
        <title>Comparison of genome degradation in Paratyphi A and Typhi, human-restricted serovars of Salmonella enterica that cause typhoid.</title>
        <authorList>
            <person name="McClelland M."/>
            <person name="Sanderson K.E."/>
            <person name="Clifton S.W."/>
            <person name="Latreille P."/>
            <person name="Porwollik S."/>
            <person name="Sabo A."/>
            <person name="Meyer R."/>
            <person name="Bieri T."/>
            <person name="Ozersky P."/>
            <person name="McLellan M."/>
            <person name="Harkins C.R."/>
            <person name="Wang C."/>
            <person name="Nguyen C."/>
            <person name="Berghoff A."/>
            <person name="Elliott G."/>
            <person name="Kohlberg S."/>
            <person name="Strong C."/>
            <person name="Du F."/>
            <person name="Carter J."/>
            <person name="Kremizki C."/>
            <person name="Layman D."/>
            <person name="Leonard S."/>
            <person name="Sun H."/>
            <person name="Fulton L."/>
            <person name="Nash W."/>
            <person name="Miner T."/>
            <person name="Minx P."/>
            <person name="Delehaunty K."/>
            <person name="Fronick C."/>
            <person name="Magrini V."/>
            <person name="Nhan M."/>
            <person name="Warren W."/>
            <person name="Florea L."/>
            <person name="Spieth J."/>
            <person name="Wilson R.K."/>
        </authorList>
    </citation>
    <scope>NUCLEOTIDE SEQUENCE [LARGE SCALE GENOMIC DNA]</scope>
    <source>
        <strain>ATCC 9150 / SARB42</strain>
    </source>
</reference>
<accession>Q5PCU0</accession>
<protein>
    <recommendedName>
        <fullName evidence="1">Protein YcgL</fullName>
    </recommendedName>
</protein>